<organism>
    <name type="scientific">Piaractus mesopotamicus</name>
    <name type="common">Small-scaled pacu</name>
    <name type="synonym">Myletes mesopotamicus</name>
    <dbReference type="NCBI Taxonomy" id="42528"/>
    <lineage>
        <taxon>Eukaryota</taxon>
        <taxon>Metazoa</taxon>
        <taxon>Chordata</taxon>
        <taxon>Craniata</taxon>
        <taxon>Vertebrata</taxon>
        <taxon>Euteleostomi</taxon>
        <taxon>Actinopterygii</taxon>
        <taxon>Neopterygii</taxon>
        <taxon>Teleostei</taxon>
        <taxon>Ostariophysi</taxon>
        <taxon>Characiformes</taxon>
        <taxon>Characoidei</taxon>
        <taxon>Piaractus</taxon>
    </lineage>
</organism>
<proteinExistence type="evidence at protein level"/>
<dbReference type="GO" id="GO:0005576">
    <property type="term" value="C:extracellular region"/>
    <property type="evidence" value="ECO:0007669"/>
    <property type="project" value="UniProtKB-SubCell"/>
</dbReference>
<dbReference type="GO" id="GO:0005179">
    <property type="term" value="F:hormone activity"/>
    <property type="evidence" value="ECO:0007669"/>
    <property type="project" value="UniProtKB-KW"/>
</dbReference>
<protein>
    <recommendedName>
        <fullName>Somatostatin-2</fullName>
    </recommendedName>
    <alternativeName>
        <fullName>Somatostatin II</fullName>
    </alternativeName>
</protein>
<feature type="chain" id="PRO_0000102280" description="Somatostatin-2">
    <location>
        <begin position="1"/>
        <end position="57" status="greater than"/>
    </location>
</feature>
<feature type="region of interest" description="Disordered" evidence="1">
    <location>
        <begin position="1"/>
        <end position="26"/>
    </location>
</feature>
<feature type="non-terminal residue">
    <location>
        <position position="57"/>
    </location>
</feature>
<sequence length="57" mass="6172">GRSHMVLNSALEGARGGPGGEEIPERFSIPELQWMLSNAELAPVQADEPPQSRMDLV</sequence>
<reference key="1">
    <citation type="journal article" date="1999" name="Comp. Biochem. Physiol.">
        <title>Purification and characterization of insulin and peptides derived from proglucagon and prosomatostatin from the fruit-eating fish, the pacu Piaractus mesopotamicus.</title>
        <authorList>
            <person name="de Lima J.A."/>
            <person name="Oliveira B."/>
            <person name="Conlon J.M."/>
        </authorList>
    </citation>
    <scope>PROTEIN SEQUENCE</scope>
    <source>
        <tissue>Pancreas</tissue>
    </source>
</reference>
<gene>
    <name type="primary">sst2</name>
</gene>
<keyword id="KW-0903">Direct protein sequencing</keyword>
<keyword id="KW-0372">Hormone</keyword>
<keyword id="KW-0964">Secreted</keyword>
<accession>P81879</accession>
<evidence type="ECO:0000256" key="1">
    <source>
        <dbReference type="SAM" id="MobiDB-lite"/>
    </source>
</evidence>
<evidence type="ECO:0000305" key="2"/>
<comment type="function">
    <text>Somatostatin inhibits the release of somatotropin.</text>
</comment>
<comment type="subcellular location">
    <subcellularLocation>
        <location>Secreted</location>
    </subcellularLocation>
</comment>
<comment type="similarity">
    <text evidence="2">Belongs to the somatostatin family.</text>
</comment>
<name>SMS2_PIAME</name>